<comment type="function">
    <text evidence="7 8 13">Lytic polysaccharide monooxygenase (LPMO) that depolymerizes crystalline and amorphous polysaccharides via the oxidation of scissile alpha- or beta-(1-4)-glycosidic bonds, yielding C1 or C4 oxidation products (PubMed:22342036, PubMed:35450635). Catalysis by LPMOs requires the reduction of the active-site copper from Cu(II) to Cu(I) by a reducing agent and H(2)O(2) or O(2) as a cosubstrate (Probable). Hydrolyzes weakly barley beta-glucan, carboxymethyl cellulose, lichenan, wheat arabinoxylan and birchwood xylan (PubMed:22342036, PubMed:35450635). Stimulates the hydrolysis of lignocellulosic substrates (such as hydrothermal pretreated wheat straw or steam-pretreated spruce), when combined with other cellulolytic enzymes (PubMed:22342036).</text>
</comment>
<comment type="catalytic activity">
    <reaction evidence="7 8">
        <text>[(1-&gt;4)-beta-D-glucosyl]n+m + reduced acceptor + O2 = 4-dehydro-beta-D-glucosyl-[(1-&gt;4)-beta-D-glucosyl]n-1 + [(1-&gt;4)-beta-D-glucosyl]m + acceptor + H2O.</text>
        <dbReference type="EC" id="1.14.99.56"/>
    </reaction>
</comment>
<comment type="cofactor">
    <cofactor evidence="2">
        <name>Cu(2+)</name>
        <dbReference type="ChEBI" id="CHEBI:29036"/>
    </cofactor>
    <text evidence="2">Binds 1 copper ion per subunit.</text>
</comment>
<comment type="activity regulation">
    <text evidence="7">The presence of lignin presents a significant source of antioxidants, which probably increase the activity by trapping liberated oxidized fragments.</text>
</comment>
<comment type="biophysicochemical properties">
    <phDependence>
        <text evidence="7">Optimum pH is 8.0.</text>
    </phDependence>
    <temperatureDependence>
        <text evidence="7">Optimum temperature is 65 degrees Celsius.</text>
    </temperatureDependence>
</comment>
<comment type="subcellular location">
    <subcellularLocation>
        <location evidence="12">Secreted</location>
    </subcellularLocation>
</comment>
<comment type="domain">
    <text evidence="3">Has a modular structure: an endo-beta-1,4-glucanase catalytic module at the N-terminus, a linker rich in serines and threonines, and a C-terminal carbohydrate-binding module (CBM). The CBM domain is essential for binding to and subsequent oxidative degradation of polysaccharide substrate.</text>
</comment>
<comment type="biotechnology">
    <text evidence="7">Lignocellulose is the most abundant polymeric composite on Earth and is a recalcitrant but promising renewable substrate for industrial biotechnology applications. Together with cellobiose dehydrogenases (CDHs) an enzymatic system capable of oxidative cellulose cleavage is formed, which increases the efficiency of cellulases and put LPMOs at focus of biofuel research.</text>
</comment>
<comment type="similarity">
    <text evidence="11">Belongs to the polysaccharide monooxygenase AA9 family.</text>
</comment>
<reference key="1">
    <citation type="journal article" date="2011" name="Nat. Biotechnol.">
        <title>Comparative genomic analysis of the thermophilic biomass-degrading fungi Myceliophthora thermophila and Thielavia terrestris.</title>
        <authorList>
            <person name="Berka R.M."/>
            <person name="Grigoriev I.V."/>
            <person name="Otillar R."/>
            <person name="Salamov A."/>
            <person name="Grimwood J."/>
            <person name="Reid I."/>
            <person name="Ishmael N."/>
            <person name="John T."/>
            <person name="Darmond C."/>
            <person name="Moisan M.-C."/>
            <person name="Henrissat B."/>
            <person name="Coutinho P.M."/>
            <person name="Lombard V."/>
            <person name="Natvig D.O."/>
            <person name="Lindquist E."/>
            <person name="Schmutz J."/>
            <person name="Lucas S."/>
            <person name="Harris P."/>
            <person name="Powlowski J."/>
            <person name="Bellemare A."/>
            <person name="Taylor D."/>
            <person name="Butler G."/>
            <person name="de Vries R.P."/>
            <person name="Allijn I.E."/>
            <person name="van den Brink J."/>
            <person name="Ushinsky S."/>
            <person name="Storms R."/>
            <person name="Powell A.J."/>
            <person name="Paulsen I.T."/>
            <person name="Elbourne L.D.H."/>
            <person name="Baker S.E."/>
            <person name="Magnuson J."/>
            <person name="LaBoissiere S."/>
            <person name="Clutterbuck A.J."/>
            <person name="Martinez D."/>
            <person name="Wogulis M."/>
            <person name="de Leon A.L."/>
            <person name="Rey M.W."/>
            <person name="Tsang A."/>
        </authorList>
    </citation>
    <scope>NUCLEOTIDE SEQUENCE [LARGE SCALE GENOMIC DNA]</scope>
    <source>
        <strain>ATCC 42464 / BCRC 31852 / DSM 1799</strain>
    </source>
</reference>
<reference key="2">
    <citation type="journal article" date="2012" name="Bioresour. Technol.">
        <title>Lignin boosts the cellulase performance of a GH-61 enzyme from Sporotrichum thermophile.</title>
        <authorList>
            <person name="Dimarogona M."/>
            <person name="Topakas E."/>
            <person name="Olsson L."/>
            <person name="Christakopoulos P."/>
        </authorList>
    </citation>
    <scope>FUNCTION</scope>
    <scope>CATALYTIC ACTIVITY</scope>
    <scope>BIOTECHNOLOGY</scope>
    <scope>BIOPHYSICOCHEMICAL PROPERTIES</scope>
    <scope>ACTIVITY REGULATION</scope>
</reference>
<reference key="3">
    <citation type="journal article" date="2022" name="Carbohydr. Polym.">
        <title>Extending the diversity of Myceliophthora thermophila LPMOs: Two different xyloglucan cleavage profiles.</title>
        <authorList>
            <person name="Sun P."/>
            <person name="de Munnik M."/>
            <person name="van Berkel W.J.H."/>
            <person name="Kabel M.A."/>
        </authorList>
    </citation>
    <scope>FUNCTION</scope>
    <scope>CATALYTIC ACTIVITY</scope>
</reference>
<sequence>MSKASALLAGLTGAALVAAHGHVSHIVVNGVYYRNYDPTTDWYQPNPPTVIGWTAADQDNGFVEPNSFGTPDIICHKSATPGGGHATVAAGDKINIVWTPEWPESHIGPVIDYLAACNGDCETVDKSSLRWFKIDGAGYDKAAGRWAADALRANGNSWLVQIPSDLKAGNYVLRHEIIALHGAQSPNGAQAYPQCINLRVTGGGSNLPSGVAGTSLYKATDPGILFNPYVSSPDYTVPGPALIAGAASSIAQSTSVATATGTATVPGGGGANPTATTTAATSAAPSTTLRTTTTSAAQTTAPPSGDVQTKYGQCGGNGWTGPTVCAPGSSCSVLNEWYSQCL</sequence>
<protein>
    <recommendedName>
        <fullName evidence="10">AA9 family lytic polysaccharide monooxygenase H</fullName>
        <shortName evidence="10">LPMO9H</shortName>
        <ecNumber evidence="7 8">1.14.99.56</ecNumber>
    </recommendedName>
    <alternativeName>
        <fullName evidence="9">Cellulase-61a</fullName>
        <shortName evidence="9">Cel61a</shortName>
    </alternativeName>
    <alternativeName>
        <fullName evidence="11">Endo-beta-1,4-glucanase LPMO9H</fullName>
        <shortName evidence="11">Endoglucanase LPMO9H</shortName>
    </alternativeName>
    <alternativeName>
        <fullName evidence="11">Glycosyl hydrolase 61 family protein LPMO9H</fullName>
    </alternativeName>
</protein>
<dbReference type="EC" id="1.14.99.56" evidence="7 8"/>
<dbReference type="EMBL" id="CP003003">
    <property type="protein sequence ID" value="AEO56542.1"/>
    <property type="molecule type" value="Genomic_DNA"/>
</dbReference>
<dbReference type="RefSeq" id="XP_003661787.1">
    <property type="nucleotide sequence ID" value="XM_003661739.1"/>
</dbReference>
<dbReference type="SMR" id="G2Q9T3"/>
<dbReference type="STRING" id="573729.G2Q9T3"/>
<dbReference type="CAZy" id="AA9">
    <property type="family name" value="Auxiliary Activities 9"/>
</dbReference>
<dbReference type="CAZy" id="CBM1">
    <property type="family name" value="Carbohydrate-Binding Module Family 1"/>
</dbReference>
<dbReference type="GeneID" id="11510592"/>
<dbReference type="KEGG" id="mtm:MYCTH_46583"/>
<dbReference type="VEuPathDB" id="FungiDB:MYCTH_46583"/>
<dbReference type="eggNOG" id="ENOG502RY3D">
    <property type="taxonomic scope" value="Eukaryota"/>
</dbReference>
<dbReference type="HOGENOM" id="CLU_031730_1_0_1"/>
<dbReference type="InParanoid" id="G2Q9T3"/>
<dbReference type="OMA" id="NDWPSSH"/>
<dbReference type="OrthoDB" id="4849160at2759"/>
<dbReference type="Proteomes" id="UP000007322">
    <property type="component" value="Chromosome 2"/>
</dbReference>
<dbReference type="GO" id="GO:0005576">
    <property type="term" value="C:extracellular region"/>
    <property type="evidence" value="ECO:0007669"/>
    <property type="project" value="UniProtKB-SubCell"/>
</dbReference>
<dbReference type="GO" id="GO:0030248">
    <property type="term" value="F:cellulose binding"/>
    <property type="evidence" value="ECO:0007669"/>
    <property type="project" value="InterPro"/>
</dbReference>
<dbReference type="GO" id="GO:0046872">
    <property type="term" value="F:metal ion binding"/>
    <property type="evidence" value="ECO:0007669"/>
    <property type="project" value="UniProtKB-KW"/>
</dbReference>
<dbReference type="GO" id="GO:0004497">
    <property type="term" value="F:monooxygenase activity"/>
    <property type="evidence" value="ECO:0007669"/>
    <property type="project" value="UniProtKB-KW"/>
</dbReference>
<dbReference type="GO" id="GO:0030245">
    <property type="term" value="P:cellulose catabolic process"/>
    <property type="evidence" value="ECO:0007669"/>
    <property type="project" value="UniProtKB-KW"/>
</dbReference>
<dbReference type="CDD" id="cd21175">
    <property type="entry name" value="LPMO_AA9"/>
    <property type="match status" value="1"/>
</dbReference>
<dbReference type="Gene3D" id="2.70.50.70">
    <property type="match status" value="1"/>
</dbReference>
<dbReference type="InterPro" id="IPR049892">
    <property type="entry name" value="AA9"/>
</dbReference>
<dbReference type="InterPro" id="IPR005103">
    <property type="entry name" value="AA9_LPMO"/>
</dbReference>
<dbReference type="InterPro" id="IPR035971">
    <property type="entry name" value="CBD_sf"/>
</dbReference>
<dbReference type="InterPro" id="IPR000254">
    <property type="entry name" value="Cellulose-bd_dom_fun"/>
</dbReference>
<dbReference type="PANTHER" id="PTHR33353:SF36">
    <property type="entry name" value="ENDO-BETA-1,4-GLUCANASE D"/>
    <property type="match status" value="1"/>
</dbReference>
<dbReference type="PANTHER" id="PTHR33353">
    <property type="entry name" value="PUTATIVE (AFU_ORTHOLOGUE AFUA_1G12560)-RELATED"/>
    <property type="match status" value="1"/>
</dbReference>
<dbReference type="Pfam" id="PF03443">
    <property type="entry name" value="AA9"/>
    <property type="match status" value="1"/>
</dbReference>
<dbReference type="Pfam" id="PF00734">
    <property type="entry name" value="CBM_1"/>
    <property type="match status" value="1"/>
</dbReference>
<dbReference type="SMART" id="SM00236">
    <property type="entry name" value="fCBD"/>
    <property type="match status" value="1"/>
</dbReference>
<dbReference type="SUPFAM" id="SSF57180">
    <property type="entry name" value="Cellulose-binding domain"/>
    <property type="match status" value="1"/>
</dbReference>
<dbReference type="PROSITE" id="PS00562">
    <property type="entry name" value="CBM1_1"/>
    <property type="match status" value="1"/>
</dbReference>
<dbReference type="PROSITE" id="PS51164">
    <property type="entry name" value="CBM1_2"/>
    <property type="match status" value="1"/>
</dbReference>
<gene>
    <name evidence="10" type="primary">LPMO9H</name>
    <name evidence="9" type="synonym">Cel61a</name>
    <name type="ORF">MYCTH_46583</name>
</gene>
<proteinExistence type="evidence at protein level"/>
<keyword id="KW-0119">Carbohydrate metabolism</keyword>
<keyword id="KW-0136">Cellulose degradation</keyword>
<keyword id="KW-0186">Copper</keyword>
<keyword id="KW-1015">Disulfide bond</keyword>
<keyword id="KW-0479">Metal-binding</keyword>
<keyword id="KW-0503">Monooxygenase</keyword>
<keyword id="KW-0560">Oxidoreductase</keyword>
<keyword id="KW-0624">Polysaccharide degradation</keyword>
<keyword id="KW-1185">Reference proteome</keyword>
<keyword id="KW-0964">Secreted</keyword>
<keyword id="KW-0732">Signal</keyword>
<organism>
    <name type="scientific">Thermothelomyces thermophilus (strain ATCC 42464 / BCRC 31852 / DSM 1799)</name>
    <name type="common">Sporotrichum thermophile</name>
    <dbReference type="NCBI Taxonomy" id="573729"/>
    <lineage>
        <taxon>Eukaryota</taxon>
        <taxon>Fungi</taxon>
        <taxon>Dikarya</taxon>
        <taxon>Ascomycota</taxon>
        <taxon>Pezizomycotina</taxon>
        <taxon>Sordariomycetes</taxon>
        <taxon>Sordariomycetidae</taxon>
        <taxon>Sordariales</taxon>
        <taxon>Chaetomiaceae</taxon>
        <taxon>Thermothelomyces</taxon>
    </lineage>
</organism>
<accession>G2Q9T3</accession>
<name>LP9H_THET4</name>
<evidence type="ECO:0000250" key="1">
    <source>
        <dbReference type="UniProtKB" id="Q1K8B6"/>
    </source>
</evidence>
<evidence type="ECO:0000250" key="2">
    <source>
        <dbReference type="UniProtKB" id="Q4WP32"/>
    </source>
</evidence>
<evidence type="ECO:0000250" key="3">
    <source>
        <dbReference type="UniProtKB" id="Q7S439"/>
    </source>
</evidence>
<evidence type="ECO:0000255" key="4"/>
<evidence type="ECO:0000255" key="5">
    <source>
        <dbReference type="PROSITE-ProRule" id="PRU00597"/>
    </source>
</evidence>
<evidence type="ECO:0000256" key="6">
    <source>
        <dbReference type="SAM" id="MobiDB-lite"/>
    </source>
</evidence>
<evidence type="ECO:0000269" key="7">
    <source>
    </source>
</evidence>
<evidence type="ECO:0000269" key="8">
    <source>
    </source>
</evidence>
<evidence type="ECO:0000303" key="9">
    <source>
    </source>
</evidence>
<evidence type="ECO:0000303" key="10">
    <source>
    </source>
</evidence>
<evidence type="ECO:0000305" key="11"/>
<evidence type="ECO:0000305" key="12">
    <source>
    </source>
</evidence>
<evidence type="ECO:0000305" key="13">
    <source>
    </source>
</evidence>
<feature type="signal peptide" evidence="4">
    <location>
        <begin position="1"/>
        <end position="19"/>
    </location>
</feature>
<feature type="chain" id="PRO_0000419258" description="AA9 family lytic polysaccharide monooxygenase H">
    <location>
        <begin position="20"/>
        <end position="342"/>
    </location>
</feature>
<feature type="domain" description="CBM1" evidence="5">
    <location>
        <begin position="306"/>
        <end position="342"/>
    </location>
</feature>
<feature type="region of interest" description="Disordered" evidence="6">
    <location>
        <begin position="263"/>
        <end position="308"/>
    </location>
</feature>
<feature type="compositionally biased region" description="Low complexity" evidence="6">
    <location>
        <begin position="272"/>
        <end position="305"/>
    </location>
</feature>
<feature type="binding site" evidence="2">
    <location>
        <position position="20"/>
    </location>
    <ligand>
        <name>Cu(2+)</name>
        <dbReference type="ChEBI" id="CHEBI:29036"/>
        <note>catalytic</note>
    </ligand>
</feature>
<feature type="binding site" evidence="2">
    <location>
        <position position="106"/>
    </location>
    <ligand>
        <name>Cu(2+)</name>
        <dbReference type="ChEBI" id="CHEBI:29036"/>
        <note>catalytic</note>
    </ligand>
</feature>
<feature type="binding site" evidence="1">
    <location>
        <position position="181"/>
    </location>
    <ligand>
        <name>O2</name>
        <dbReference type="ChEBI" id="CHEBI:15379"/>
    </ligand>
</feature>
<feature type="binding site" evidence="1">
    <location>
        <position position="190"/>
    </location>
    <ligand>
        <name>O2</name>
        <dbReference type="ChEBI" id="CHEBI:15379"/>
    </ligand>
</feature>
<feature type="binding site" evidence="2">
    <location>
        <position position="192"/>
    </location>
    <ligand>
        <name>Cu(2+)</name>
        <dbReference type="ChEBI" id="CHEBI:29036"/>
        <note>catalytic</note>
    </ligand>
</feature>
<feature type="disulfide bond" evidence="2">
    <location>
        <begin position="75"/>
        <end position="195"/>
    </location>
</feature>
<feature type="disulfide bond" evidence="2">
    <location>
        <begin position="117"/>
        <end position="121"/>
    </location>
</feature>